<name>TGB1_PVXCP</name>
<comment type="function">
    <text evidence="1">Transports viral genome to neighboring plant cells directly through plasmosdesmata, without any budding. The movement protein allows efficient cell to cell propagation, by bypassing the host cell wall barrier. Increases plasmodesma size exclusion limit. Acts as a suppressor of RNA-mediated gene silencing, also known as post-transcriptional gene silencing (PTGS), a mechanism of plant viral defense that limits the accumulation of viral RNAs (By similarity).</text>
</comment>
<comment type="subunit">
    <text evidence="1">Homodimer and homooligomer. Interacts with capsid protein. Interacts with host AGO1; this interaction targets the host protein for degradation, thereby suppressing the antiviral RNA silencing (By similarity).</text>
</comment>
<comment type="subcellular location">
    <subcellularLocation>
        <location evidence="1">Host cytoplasm</location>
    </subcellularLocation>
</comment>
<comment type="miscellaneous">
    <text>TGBp1, TGBp2 and TGBp3 seem to act together for cell-to-cell propagation. TGBp1 is the main movement protein that physically cross the plasmodesma with the viral genome. TGBp2 and TGBp3 would facilitate TGBp1 function.</text>
</comment>
<comment type="similarity">
    <text evidence="2">Belongs to the Tymovirales TGBp1 protein family.</text>
</comment>
<dbReference type="EMBL" id="M31541">
    <property type="protein sequence ID" value="AAA47179.1"/>
    <property type="molecule type" value="Genomic_RNA"/>
</dbReference>
<dbReference type="EMBL" id="X55802">
    <property type="protein sequence ID" value="CAA39325.1"/>
    <property type="molecule type" value="Genomic_RNA"/>
</dbReference>
<dbReference type="PIR" id="S14006">
    <property type="entry name" value="S14006"/>
</dbReference>
<dbReference type="Proteomes" id="UP000008615">
    <property type="component" value="Genome"/>
</dbReference>
<dbReference type="GO" id="GO:0030430">
    <property type="term" value="C:host cell cytoplasm"/>
    <property type="evidence" value="ECO:0007669"/>
    <property type="project" value="UniProtKB-SubCell"/>
</dbReference>
<dbReference type="GO" id="GO:0005524">
    <property type="term" value="F:ATP binding"/>
    <property type="evidence" value="ECO:0007669"/>
    <property type="project" value="InterPro"/>
</dbReference>
<dbReference type="GO" id="GO:0003723">
    <property type="term" value="F:RNA binding"/>
    <property type="evidence" value="ECO:0007669"/>
    <property type="project" value="UniProtKB-KW"/>
</dbReference>
<dbReference type="GO" id="GO:0052170">
    <property type="term" value="P:symbiont-mediated suppression of host innate immune response"/>
    <property type="evidence" value="ECO:0007669"/>
    <property type="project" value="UniProtKB-KW"/>
</dbReference>
<dbReference type="GO" id="GO:0046740">
    <property type="term" value="P:transport of virus in host, cell to cell"/>
    <property type="evidence" value="ECO:0007669"/>
    <property type="project" value="UniProtKB-KW"/>
</dbReference>
<dbReference type="InterPro" id="IPR027351">
    <property type="entry name" value="(+)RNA_virus_helicase_core_dom"/>
</dbReference>
<dbReference type="Pfam" id="PF01443">
    <property type="entry name" value="Viral_helicase1"/>
    <property type="match status" value="1"/>
</dbReference>
<dbReference type="PROSITE" id="PS51657">
    <property type="entry name" value="PSRV_HELICASE"/>
    <property type="match status" value="1"/>
</dbReference>
<gene>
    <name type="ORF">ORF2</name>
</gene>
<reference key="1">
    <citation type="journal article" date="1990" name="Virus Res.">
        <title>Complete cDNA sequence of a South American isolate of potato virus X.</title>
        <authorList>
            <person name="Orman B.E."/>
            <person name="Celnik R.M."/>
            <person name="Mandel A.M."/>
            <person name="Torres H.N."/>
            <person name="Mentaberry A.N."/>
        </authorList>
    </citation>
    <scope>NUCLEOTIDE SEQUENCE [GENOMIC RNA]</scope>
</reference>
<reference key="2">
    <citation type="journal article" date="2005" name="Mol. Plant Microbe Interact.">
        <title>A new cell-to-cell transport model for Potexviruses.</title>
        <authorList>
            <person name="Verchot-Lubicz J."/>
        </authorList>
    </citation>
    <scope>REVIEW</scope>
</reference>
<protein>
    <recommendedName>
        <fullName>Movement and silencing protein TGBp1</fullName>
    </recommendedName>
    <alternativeName>
        <fullName>25 kDa protein</fullName>
    </alternativeName>
    <alternativeName>
        <fullName>Silencing suppressor P25</fullName>
    </alternativeName>
    <alternativeName>
        <fullName>Triple gene block 1 protein</fullName>
        <shortName>TGBp1</shortName>
    </alternativeName>
</protein>
<feature type="chain" id="PRO_0000222571" description="Movement and silencing protein TGBp1">
    <location>
        <begin position="1"/>
        <end position="226"/>
    </location>
</feature>
<feature type="domain" description="(+)RNA virus helicase ATP-binding">
    <location>
        <begin position="1"/>
        <end position="138"/>
    </location>
</feature>
<feature type="domain" description="(+)RNA virus helicase C-terminal">
    <location>
        <begin position="139"/>
        <end position="226"/>
    </location>
</feature>
<proteinExistence type="inferred from homology"/>
<accession>P22592</accession>
<keyword id="KW-1035">Host cytoplasm</keyword>
<keyword id="KW-0945">Host-virus interaction</keyword>
<keyword id="KW-1090">Inhibition of host innate immune response by virus</keyword>
<keyword id="KW-0694">RNA-binding</keyword>
<keyword id="KW-0941">Suppressor of RNA silencing</keyword>
<keyword id="KW-0813">Transport</keyword>
<keyword id="KW-0899">Viral immunoevasion</keyword>
<keyword id="KW-0916">Viral movement protein</keyword>
<organismHost>
    <name type="scientific">Brassica campestris</name>
    <name type="common">Field mustard</name>
    <dbReference type="NCBI Taxonomy" id="3711"/>
</organismHost>
<organismHost>
    <name type="scientific">Solanum tuberosum</name>
    <name type="common">Potato</name>
    <dbReference type="NCBI Taxonomy" id="4113"/>
</organismHost>
<organism>
    <name type="scientific">Potato virus X (strain CP)</name>
    <name type="common">PVX</name>
    <dbReference type="NCBI Taxonomy" id="12184"/>
    <lineage>
        <taxon>Viruses</taxon>
        <taxon>Riboviria</taxon>
        <taxon>Orthornavirae</taxon>
        <taxon>Kitrinoviricota</taxon>
        <taxon>Alsuviricetes</taxon>
        <taxon>Tymovirales</taxon>
        <taxon>Alphaflexiviridae</taxon>
        <taxon>Potexvirus</taxon>
        <taxon>Potato virus X</taxon>
    </lineage>
</organism>
<sequence length="226" mass="24420">MDILIISLKSLGYSRTARPLDSSPLVVHAVAGAGKSTALRKLLARHSTFTVHTLGVPDKISIRTRGIQKPGPIPEGNFAILDEYTLDATTREAYQALFADPYQAPELSLEPHFYLETSFRTPTKAAALIASCGFDFETNSQEEGHLEITGIFKGPLLGKVIAIDSEAETTLSRHGVEFVKPCQVTGLEFPVVTIVSAAPIEEIGQSTLFYNAITRSKGLTYVRAGA</sequence>
<evidence type="ECO:0000250" key="1"/>
<evidence type="ECO:0000305" key="2"/>